<dbReference type="EMBL" id="AM902716">
    <property type="protein sequence ID" value="CAP44041.1"/>
    <property type="molecule type" value="Genomic_DNA"/>
</dbReference>
<dbReference type="SMR" id="A9I0D6"/>
<dbReference type="STRING" id="94624.Bpet3698"/>
<dbReference type="KEGG" id="bpt:Bpet3698"/>
<dbReference type="eggNOG" id="COG1666">
    <property type="taxonomic scope" value="Bacteria"/>
</dbReference>
<dbReference type="Proteomes" id="UP000001225">
    <property type="component" value="Chromosome"/>
</dbReference>
<dbReference type="GO" id="GO:0005829">
    <property type="term" value="C:cytosol"/>
    <property type="evidence" value="ECO:0007669"/>
    <property type="project" value="TreeGrafter"/>
</dbReference>
<dbReference type="GO" id="GO:0000166">
    <property type="term" value="F:nucleotide binding"/>
    <property type="evidence" value="ECO:0007669"/>
    <property type="project" value="TreeGrafter"/>
</dbReference>
<dbReference type="CDD" id="cd11740">
    <property type="entry name" value="YajQ_like"/>
    <property type="match status" value="1"/>
</dbReference>
<dbReference type="Gene3D" id="3.30.70.860">
    <property type="match status" value="1"/>
</dbReference>
<dbReference type="Gene3D" id="3.30.70.990">
    <property type="entry name" value="YajQ-like, domain 2"/>
    <property type="match status" value="1"/>
</dbReference>
<dbReference type="HAMAP" id="MF_00632">
    <property type="entry name" value="YajQ"/>
    <property type="match status" value="1"/>
</dbReference>
<dbReference type="InterPro" id="IPR007551">
    <property type="entry name" value="DUF520"/>
</dbReference>
<dbReference type="InterPro" id="IPR035571">
    <property type="entry name" value="UPF0234-like_C"/>
</dbReference>
<dbReference type="InterPro" id="IPR035570">
    <property type="entry name" value="UPF0234_N"/>
</dbReference>
<dbReference type="InterPro" id="IPR036183">
    <property type="entry name" value="YajQ-like_sf"/>
</dbReference>
<dbReference type="NCBIfam" id="NF003819">
    <property type="entry name" value="PRK05412.1"/>
    <property type="match status" value="1"/>
</dbReference>
<dbReference type="PANTHER" id="PTHR30476">
    <property type="entry name" value="UPF0234 PROTEIN YAJQ"/>
    <property type="match status" value="1"/>
</dbReference>
<dbReference type="PANTHER" id="PTHR30476:SF0">
    <property type="entry name" value="UPF0234 PROTEIN YAJQ"/>
    <property type="match status" value="1"/>
</dbReference>
<dbReference type="Pfam" id="PF04461">
    <property type="entry name" value="DUF520"/>
    <property type="match status" value="1"/>
</dbReference>
<dbReference type="SUPFAM" id="SSF89963">
    <property type="entry name" value="YajQ-like"/>
    <property type="match status" value="2"/>
</dbReference>
<evidence type="ECO:0000255" key="1">
    <source>
        <dbReference type="HAMAP-Rule" id="MF_00632"/>
    </source>
</evidence>
<proteinExistence type="inferred from homology"/>
<feature type="chain" id="PRO_1000130603" description="Nucleotide-binding protein Bpet3698">
    <location>
        <begin position="1"/>
        <end position="160"/>
    </location>
</feature>
<organism>
    <name type="scientific">Bordetella petrii (strain ATCC BAA-461 / DSM 12804 / CCUG 43448)</name>
    <dbReference type="NCBI Taxonomy" id="340100"/>
    <lineage>
        <taxon>Bacteria</taxon>
        <taxon>Pseudomonadati</taxon>
        <taxon>Pseudomonadota</taxon>
        <taxon>Betaproteobacteria</taxon>
        <taxon>Burkholderiales</taxon>
        <taxon>Alcaligenaceae</taxon>
        <taxon>Bordetella</taxon>
    </lineage>
</organism>
<comment type="function">
    <text evidence="1">Nucleotide-binding protein.</text>
</comment>
<comment type="similarity">
    <text evidence="1">Belongs to the YajQ family.</text>
</comment>
<reference key="1">
    <citation type="journal article" date="2008" name="BMC Genomics">
        <title>The missing link: Bordetella petrii is endowed with both the metabolic versatility of environmental bacteria and virulence traits of pathogenic Bordetellae.</title>
        <authorList>
            <person name="Gross R."/>
            <person name="Guzman C.A."/>
            <person name="Sebaihia M."/>
            <person name="Martin dos Santos V.A.P."/>
            <person name="Pieper D.H."/>
            <person name="Koebnik R."/>
            <person name="Lechner M."/>
            <person name="Bartels D."/>
            <person name="Buhrmester J."/>
            <person name="Choudhuri J.V."/>
            <person name="Ebensen T."/>
            <person name="Gaigalat L."/>
            <person name="Herrmann S."/>
            <person name="Khachane A.N."/>
            <person name="Larisch C."/>
            <person name="Link S."/>
            <person name="Linke B."/>
            <person name="Meyer F."/>
            <person name="Mormann S."/>
            <person name="Nakunst D."/>
            <person name="Rueckert C."/>
            <person name="Schneiker-Bekel S."/>
            <person name="Schulze K."/>
            <person name="Voerholter F.-J."/>
            <person name="Yevsa T."/>
            <person name="Engle J.T."/>
            <person name="Goldman W.E."/>
            <person name="Puehler A."/>
            <person name="Goebel U.B."/>
            <person name="Goesmann A."/>
            <person name="Bloecker H."/>
            <person name="Kaiser O."/>
            <person name="Martinez-Arias R."/>
        </authorList>
    </citation>
    <scope>NUCLEOTIDE SEQUENCE [LARGE SCALE GENOMIC DNA]</scope>
    <source>
        <strain>ATCC BAA-461 / DSM 12804 / CCUG 43448</strain>
    </source>
</reference>
<gene>
    <name type="ordered locus">Bpet3698</name>
</gene>
<keyword id="KW-0547">Nucleotide-binding</keyword>
<protein>
    <recommendedName>
        <fullName evidence="1">Nucleotide-binding protein Bpet3698</fullName>
    </recommendedName>
</protein>
<name>Y3698_BORPD</name>
<sequence>MPSFDVVSEVDKHELSNAVDQANRELATRFDFKGTDAKFELEGFVVTQVAPSAFQLKQMLDILRGRLSARGIDVRCLEVADPLENLGGARQKVTVRQGIEQPVAKKLIAAIKGAKLKVESQINGDKLRISGKKRDDLQEVIALLRKTDVDLPLQYQNFRD</sequence>
<accession>A9I0D6</accession>